<sequence>MSGKVRLEDRVSAWAMPIVEELGLELIDVEWVKEGGNWYLRIFIDKEAGIEMEDCQEVSRRIDEILDREDPVAHSYSLEVSSPGIDRPLKSDRDYERFRGETVRITTFAPVMGAKEHLGELAGKNETSILIRKNDEEMAIPLTQVSSVRLYPGF</sequence>
<evidence type="ECO:0000255" key="1">
    <source>
        <dbReference type="HAMAP-Rule" id="MF_01077"/>
    </source>
</evidence>
<comment type="function">
    <text evidence="1">Required for maturation of 30S ribosomal subunits.</text>
</comment>
<comment type="subcellular location">
    <subcellularLocation>
        <location evidence="1">Cytoplasm</location>
    </subcellularLocation>
</comment>
<comment type="similarity">
    <text evidence="1">Belongs to the RimP family.</text>
</comment>
<feature type="chain" id="PRO_0000384682" description="Ribosome maturation factor RimP">
    <location>
        <begin position="1"/>
        <end position="154"/>
    </location>
</feature>
<keyword id="KW-0963">Cytoplasm</keyword>
<keyword id="KW-1185">Reference proteome</keyword>
<keyword id="KW-0690">Ribosome biogenesis</keyword>
<reference key="1">
    <citation type="journal article" date="2008" name="J. Bacteriol.">
        <title>The genome of Heliobacterium modesticaldum, a phototrophic representative of the Firmicutes containing the simplest photosynthetic apparatus.</title>
        <authorList>
            <person name="Sattley W.M."/>
            <person name="Madigan M.T."/>
            <person name="Swingley W.D."/>
            <person name="Cheung P.C."/>
            <person name="Clocksin K.M."/>
            <person name="Conrad A.L."/>
            <person name="Dejesa L.C."/>
            <person name="Honchak B.M."/>
            <person name="Jung D.O."/>
            <person name="Karbach L.E."/>
            <person name="Kurdoglu A."/>
            <person name="Lahiri S."/>
            <person name="Mastrian S.D."/>
            <person name="Page L.E."/>
            <person name="Taylor H.L."/>
            <person name="Wang Z.T."/>
            <person name="Raymond J."/>
            <person name="Chen M."/>
            <person name="Blankenship R.E."/>
            <person name="Touchman J.W."/>
        </authorList>
    </citation>
    <scope>NUCLEOTIDE SEQUENCE [LARGE SCALE GENOMIC DNA]</scope>
    <source>
        <strain>ATCC 51547 / Ice1</strain>
    </source>
</reference>
<organism>
    <name type="scientific">Heliobacterium modesticaldum (strain ATCC 51547 / Ice1)</name>
    <dbReference type="NCBI Taxonomy" id="498761"/>
    <lineage>
        <taxon>Bacteria</taxon>
        <taxon>Bacillati</taxon>
        <taxon>Bacillota</taxon>
        <taxon>Clostridia</taxon>
        <taxon>Eubacteriales</taxon>
        <taxon>Heliobacteriaceae</taxon>
        <taxon>Heliomicrobium</taxon>
    </lineage>
</organism>
<protein>
    <recommendedName>
        <fullName evidence="1">Ribosome maturation factor RimP</fullName>
    </recommendedName>
</protein>
<name>RIMP_HELMI</name>
<accession>B0THQ9</accession>
<dbReference type="EMBL" id="CP000930">
    <property type="protein sequence ID" value="ABZ84842.1"/>
    <property type="molecule type" value="Genomic_DNA"/>
</dbReference>
<dbReference type="RefSeq" id="WP_012283340.1">
    <property type="nucleotide sequence ID" value="NC_010337.2"/>
</dbReference>
<dbReference type="SMR" id="B0THQ9"/>
<dbReference type="STRING" id="498761.HM1_2309"/>
<dbReference type="KEGG" id="hmo:HM1_2309"/>
<dbReference type="eggNOG" id="COG0779">
    <property type="taxonomic scope" value="Bacteria"/>
</dbReference>
<dbReference type="HOGENOM" id="CLU_070525_2_2_9"/>
<dbReference type="OrthoDB" id="9805006at2"/>
<dbReference type="Proteomes" id="UP000008550">
    <property type="component" value="Chromosome"/>
</dbReference>
<dbReference type="GO" id="GO:0005829">
    <property type="term" value="C:cytosol"/>
    <property type="evidence" value="ECO:0007669"/>
    <property type="project" value="TreeGrafter"/>
</dbReference>
<dbReference type="GO" id="GO:0000028">
    <property type="term" value="P:ribosomal small subunit assembly"/>
    <property type="evidence" value="ECO:0007669"/>
    <property type="project" value="TreeGrafter"/>
</dbReference>
<dbReference type="GO" id="GO:0006412">
    <property type="term" value="P:translation"/>
    <property type="evidence" value="ECO:0007669"/>
    <property type="project" value="TreeGrafter"/>
</dbReference>
<dbReference type="CDD" id="cd01734">
    <property type="entry name" value="YlxS_C"/>
    <property type="match status" value="1"/>
</dbReference>
<dbReference type="FunFam" id="3.30.300.70:FF:000001">
    <property type="entry name" value="Ribosome maturation factor RimP"/>
    <property type="match status" value="1"/>
</dbReference>
<dbReference type="Gene3D" id="2.30.30.180">
    <property type="entry name" value="Ribosome maturation factor RimP, C-terminal domain"/>
    <property type="match status" value="1"/>
</dbReference>
<dbReference type="Gene3D" id="3.30.300.70">
    <property type="entry name" value="RimP-like superfamily, N-terminal"/>
    <property type="match status" value="1"/>
</dbReference>
<dbReference type="HAMAP" id="MF_01077">
    <property type="entry name" value="RimP"/>
    <property type="match status" value="1"/>
</dbReference>
<dbReference type="InterPro" id="IPR003728">
    <property type="entry name" value="Ribosome_maturation_RimP"/>
</dbReference>
<dbReference type="InterPro" id="IPR028998">
    <property type="entry name" value="RimP_C"/>
</dbReference>
<dbReference type="InterPro" id="IPR036847">
    <property type="entry name" value="RimP_C_sf"/>
</dbReference>
<dbReference type="InterPro" id="IPR028989">
    <property type="entry name" value="RimP_N"/>
</dbReference>
<dbReference type="InterPro" id="IPR035956">
    <property type="entry name" value="RimP_N_sf"/>
</dbReference>
<dbReference type="PANTHER" id="PTHR33867">
    <property type="entry name" value="RIBOSOME MATURATION FACTOR RIMP"/>
    <property type="match status" value="1"/>
</dbReference>
<dbReference type="PANTHER" id="PTHR33867:SF1">
    <property type="entry name" value="RIBOSOME MATURATION FACTOR RIMP"/>
    <property type="match status" value="1"/>
</dbReference>
<dbReference type="Pfam" id="PF17384">
    <property type="entry name" value="DUF150_C"/>
    <property type="match status" value="1"/>
</dbReference>
<dbReference type="Pfam" id="PF02576">
    <property type="entry name" value="RimP_N"/>
    <property type="match status" value="1"/>
</dbReference>
<dbReference type="SUPFAM" id="SSF74942">
    <property type="entry name" value="YhbC-like, C-terminal domain"/>
    <property type="match status" value="1"/>
</dbReference>
<dbReference type="SUPFAM" id="SSF75420">
    <property type="entry name" value="YhbC-like, N-terminal domain"/>
    <property type="match status" value="1"/>
</dbReference>
<proteinExistence type="inferred from homology"/>
<gene>
    <name evidence="1" type="primary">rimP</name>
    <name type="ordered locus">Helmi_22170</name>
    <name type="ORF">HM1_2309</name>
</gene>